<organism>
    <name type="scientific">Geobacillus kaustophilus (strain HTA426)</name>
    <dbReference type="NCBI Taxonomy" id="235909"/>
    <lineage>
        <taxon>Bacteria</taxon>
        <taxon>Bacillati</taxon>
        <taxon>Bacillota</taxon>
        <taxon>Bacilli</taxon>
        <taxon>Bacillales</taxon>
        <taxon>Anoxybacillaceae</taxon>
        <taxon>Geobacillus</taxon>
        <taxon>Geobacillus thermoleovorans group</taxon>
    </lineage>
</organism>
<accession>Q5L0N1</accession>
<gene>
    <name evidence="1" type="primary">hslU</name>
    <name type="ordered locus">GK1214</name>
</gene>
<dbReference type="EMBL" id="BA000043">
    <property type="protein sequence ID" value="BAD75499.1"/>
    <property type="molecule type" value="Genomic_DNA"/>
</dbReference>
<dbReference type="SMR" id="Q5L0N1"/>
<dbReference type="STRING" id="235909.GK1214"/>
<dbReference type="KEGG" id="gka:GK1214"/>
<dbReference type="eggNOG" id="COG1220">
    <property type="taxonomic scope" value="Bacteria"/>
</dbReference>
<dbReference type="HOGENOM" id="CLU_033123_0_0_9"/>
<dbReference type="Proteomes" id="UP000001172">
    <property type="component" value="Chromosome"/>
</dbReference>
<dbReference type="GO" id="GO:0009376">
    <property type="term" value="C:HslUV protease complex"/>
    <property type="evidence" value="ECO:0007669"/>
    <property type="project" value="UniProtKB-UniRule"/>
</dbReference>
<dbReference type="GO" id="GO:0005524">
    <property type="term" value="F:ATP binding"/>
    <property type="evidence" value="ECO:0007669"/>
    <property type="project" value="UniProtKB-UniRule"/>
</dbReference>
<dbReference type="GO" id="GO:0016887">
    <property type="term" value="F:ATP hydrolysis activity"/>
    <property type="evidence" value="ECO:0007669"/>
    <property type="project" value="InterPro"/>
</dbReference>
<dbReference type="GO" id="GO:0008233">
    <property type="term" value="F:peptidase activity"/>
    <property type="evidence" value="ECO:0007669"/>
    <property type="project" value="InterPro"/>
</dbReference>
<dbReference type="GO" id="GO:0036402">
    <property type="term" value="F:proteasome-activating activity"/>
    <property type="evidence" value="ECO:0007669"/>
    <property type="project" value="UniProtKB-UniRule"/>
</dbReference>
<dbReference type="GO" id="GO:0043335">
    <property type="term" value="P:protein unfolding"/>
    <property type="evidence" value="ECO:0007669"/>
    <property type="project" value="UniProtKB-UniRule"/>
</dbReference>
<dbReference type="GO" id="GO:0051603">
    <property type="term" value="P:proteolysis involved in protein catabolic process"/>
    <property type="evidence" value="ECO:0007669"/>
    <property type="project" value="TreeGrafter"/>
</dbReference>
<dbReference type="CDD" id="cd19498">
    <property type="entry name" value="RecA-like_HslU"/>
    <property type="match status" value="1"/>
</dbReference>
<dbReference type="FunFam" id="3.40.50.300:FF:000213">
    <property type="entry name" value="ATP-dependent protease ATPase subunit HslU"/>
    <property type="match status" value="1"/>
</dbReference>
<dbReference type="FunFam" id="3.40.50.300:FF:000220">
    <property type="entry name" value="ATP-dependent protease ATPase subunit HslU"/>
    <property type="match status" value="1"/>
</dbReference>
<dbReference type="Gene3D" id="1.10.8.60">
    <property type="match status" value="1"/>
</dbReference>
<dbReference type="Gene3D" id="1.10.8.10">
    <property type="entry name" value="DNA helicase RuvA subunit, C-terminal domain"/>
    <property type="match status" value="2"/>
</dbReference>
<dbReference type="Gene3D" id="3.40.50.300">
    <property type="entry name" value="P-loop containing nucleotide triphosphate hydrolases"/>
    <property type="match status" value="2"/>
</dbReference>
<dbReference type="HAMAP" id="MF_00249">
    <property type="entry name" value="HslU"/>
    <property type="match status" value="1"/>
</dbReference>
<dbReference type="InterPro" id="IPR003593">
    <property type="entry name" value="AAA+_ATPase"/>
</dbReference>
<dbReference type="InterPro" id="IPR050052">
    <property type="entry name" value="ATP-dep_Clp_protease_ClpX"/>
</dbReference>
<dbReference type="InterPro" id="IPR003959">
    <property type="entry name" value="ATPase_AAA_core"/>
</dbReference>
<dbReference type="InterPro" id="IPR019489">
    <property type="entry name" value="Clp_ATPase_C"/>
</dbReference>
<dbReference type="InterPro" id="IPR004491">
    <property type="entry name" value="HslU"/>
</dbReference>
<dbReference type="InterPro" id="IPR027417">
    <property type="entry name" value="P-loop_NTPase"/>
</dbReference>
<dbReference type="NCBIfam" id="TIGR00390">
    <property type="entry name" value="hslU"/>
    <property type="match status" value="1"/>
</dbReference>
<dbReference type="NCBIfam" id="NF003544">
    <property type="entry name" value="PRK05201.1"/>
    <property type="match status" value="1"/>
</dbReference>
<dbReference type="PANTHER" id="PTHR48102">
    <property type="entry name" value="ATP-DEPENDENT CLP PROTEASE ATP-BINDING SUBUNIT CLPX-LIKE, MITOCHONDRIAL-RELATED"/>
    <property type="match status" value="1"/>
</dbReference>
<dbReference type="PANTHER" id="PTHR48102:SF3">
    <property type="entry name" value="ATP-DEPENDENT PROTEASE ATPASE SUBUNIT HSLU"/>
    <property type="match status" value="1"/>
</dbReference>
<dbReference type="Pfam" id="PF00004">
    <property type="entry name" value="AAA"/>
    <property type="match status" value="1"/>
</dbReference>
<dbReference type="Pfam" id="PF07724">
    <property type="entry name" value="AAA_2"/>
    <property type="match status" value="1"/>
</dbReference>
<dbReference type="Pfam" id="PF10431">
    <property type="entry name" value="ClpB_D2-small"/>
    <property type="match status" value="1"/>
</dbReference>
<dbReference type="SMART" id="SM00382">
    <property type="entry name" value="AAA"/>
    <property type="match status" value="1"/>
</dbReference>
<dbReference type="SMART" id="SM01086">
    <property type="entry name" value="ClpB_D2-small"/>
    <property type="match status" value="1"/>
</dbReference>
<dbReference type="SUPFAM" id="SSF52540">
    <property type="entry name" value="P-loop containing nucleoside triphosphate hydrolases"/>
    <property type="match status" value="1"/>
</dbReference>
<keyword id="KW-0067">ATP-binding</keyword>
<keyword id="KW-0143">Chaperone</keyword>
<keyword id="KW-0963">Cytoplasm</keyword>
<keyword id="KW-0547">Nucleotide-binding</keyword>
<keyword id="KW-1185">Reference proteome</keyword>
<comment type="function">
    <text evidence="1">ATPase subunit of a proteasome-like degradation complex; this subunit has chaperone activity. The binding of ATP and its subsequent hydrolysis by HslU are essential for unfolding of protein substrates subsequently hydrolyzed by HslV. HslU recognizes the N-terminal part of its protein substrates and unfolds these before they are guided to HslV for hydrolysis.</text>
</comment>
<comment type="subunit">
    <text evidence="1">A double ring-shaped homohexamer of HslV is capped on each side by a ring-shaped HslU homohexamer. The assembly of the HslU/HslV complex is dependent on binding of ATP.</text>
</comment>
<comment type="subcellular location">
    <subcellularLocation>
        <location evidence="1">Cytoplasm</location>
    </subcellularLocation>
</comment>
<comment type="similarity">
    <text evidence="1">Belongs to the ClpX chaperone family. HslU subfamily.</text>
</comment>
<proteinExistence type="inferred from homology"/>
<evidence type="ECO:0000255" key="1">
    <source>
        <dbReference type="HAMAP-Rule" id="MF_00249"/>
    </source>
</evidence>
<sequence length="465" mass="52349">MMAETLTPRQIVEKLDQFIVGQKEAKKAVAIALRNRYRRSLLDEKLRDEVMPKNILMIGPTGVGKTEIARRLAKLVGAPFIKVEATKFTEVGYVGRDVESMVRDLVETSVRLVKERKMNEVKDRAEQQANKRLVELLVPGKPKQTIKNPLELLFGGQGAQADNSYSHEDEQVEQKRRQVAWQLANGQLENEMVTIEIEEQTPLWFDFLQGAGIEQMGMNMQDALSSLMPKRRKKRRLKVSEARKVLINEEAQKLIDMDEVTQEAVRLAEQSGIIFIDEIDKIARSGAVSGSADVSREGVQRDILPIVEGSTVMTKYGPVKTDHILFIAAGAFHMAKPSDLIPELQGRFPIRVELAKLSVDDFVRILVEPNNALIKQYQALLATEGISLEFSDDAIRKIAEVAFEVNQTTDNIGARRLHTILEKLLEDLLFEAPDIGIDKVVITPQYVEQKLGSIVKNKDLSEFIL</sequence>
<feature type="chain" id="PRO_0000160506" description="ATP-dependent protease ATPase subunit HslU">
    <location>
        <begin position="1"/>
        <end position="465"/>
    </location>
</feature>
<feature type="binding site" evidence="1">
    <location>
        <position position="20"/>
    </location>
    <ligand>
        <name>ATP</name>
        <dbReference type="ChEBI" id="CHEBI:30616"/>
    </ligand>
</feature>
<feature type="binding site" evidence="1">
    <location>
        <begin position="62"/>
        <end position="67"/>
    </location>
    <ligand>
        <name>ATP</name>
        <dbReference type="ChEBI" id="CHEBI:30616"/>
    </ligand>
</feature>
<feature type="binding site" evidence="1">
    <location>
        <position position="277"/>
    </location>
    <ligand>
        <name>ATP</name>
        <dbReference type="ChEBI" id="CHEBI:30616"/>
    </ligand>
</feature>
<feature type="binding site" evidence="1">
    <location>
        <position position="343"/>
    </location>
    <ligand>
        <name>ATP</name>
        <dbReference type="ChEBI" id="CHEBI:30616"/>
    </ligand>
</feature>
<feature type="binding site" evidence="1">
    <location>
        <position position="415"/>
    </location>
    <ligand>
        <name>ATP</name>
        <dbReference type="ChEBI" id="CHEBI:30616"/>
    </ligand>
</feature>
<protein>
    <recommendedName>
        <fullName evidence="1">ATP-dependent protease ATPase subunit HslU</fullName>
    </recommendedName>
    <alternativeName>
        <fullName evidence="1">Unfoldase HslU</fullName>
    </alternativeName>
</protein>
<reference key="1">
    <citation type="journal article" date="2004" name="Nucleic Acids Res.">
        <title>Thermoadaptation trait revealed by the genome sequence of thermophilic Geobacillus kaustophilus.</title>
        <authorList>
            <person name="Takami H."/>
            <person name="Takaki Y."/>
            <person name="Chee G.-J."/>
            <person name="Nishi S."/>
            <person name="Shimamura S."/>
            <person name="Suzuki H."/>
            <person name="Matsui S."/>
            <person name="Uchiyama I."/>
        </authorList>
    </citation>
    <scope>NUCLEOTIDE SEQUENCE [LARGE SCALE GENOMIC DNA]</scope>
    <source>
        <strain>HTA426</strain>
    </source>
</reference>
<name>HSLU_GEOKA</name>